<keyword id="KW-0223">Dioxygenase</keyword>
<keyword id="KW-0408">Iron</keyword>
<keyword id="KW-0479">Metal-binding</keyword>
<keyword id="KW-0560">Oxidoreductase</keyword>
<keyword id="KW-1185">Reference proteome</keyword>
<keyword id="KW-0847">Vitamin C</keyword>
<accession>B7MGR2</accession>
<evidence type="ECO:0000255" key="1">
    <source>
        <dbReference type="HAMAP-Rule" id="MF_00657"/>
    </source>
</evidence>
<feature type="chain" id="PRO_1000131209" description="PKHD-type hydroxylase YbiX">
    <location>
        <begin position="1"/>
        <end position="225"/>
    </location>
</feature>
<feature type="domain" description="Fe2OG dioxygenase" evidence="1">
    <location>
        <begin position="78"/>
        <end position="177"/>
    </location>
</feature>
<feature type="binding site" evidence="1">
    <location>
        <position position="96"/>
    </location>
    <ligand>
        <name>Fe cation</name>
        <dbReference type="ChEBI" id="CHEBI:24875"/>
    </ligand>
</feature>
<feature type="binding site" evidence="1">
    <location>
        <position position="98"/>
    </location>
    <ligand>
        <name>Fe cation</name>
        <dbReference type="ChEBI" id="CHEBI:24875"/>
    </ligand>
</feature>
<feature type="binding site" evidence="1">
    <location>
        <position position="158"/>
    </location>
    <ligand>
        <name>Fe cation</name>
        <dbReference type="ChEBI" id="CHEBI:24875"/>
    </ligand>
</feature>
<feature type="binding site" evidence="1">
    <location>
        <position position="168"/>
    </location>
    <ligand>
        <name>2-oxoglutarate</name>
        <dbReference type="ChEBI" id="CHEBI:16810"/>
    </ligand>
</feature>
<comment type="cofactor">
    <cofactor evidence="1">
        <name>Fe(2+)</name>
        <dbReference type="ChEBI" id="CHEBI:29033"/>
    </cofactor>
    <text evidence="1">Binds 1 Fe(2+) ion per subunit.</text>
</comment>
<comment type="cofactor">
    <cofactor evidence="1">
        <name>L-ascorbate</name>
        <dbReference type="ChEBI" id="CHEBI:38290"/>
    </cofactor>
</comment>
<name>YBIX_ECO45</name>
<reference key="1">
    <citation type="journal article" date="2009" name="PLoS Genet.">
        <title>Organised genome dynamics in the Escherichia coli species results in highly diverse adaptive paths.</title>
        <authorList>
            <person name="Touchon M."/>
            <person name="Hoede C."/>
            <person name="Tenaillon O."/>
            <person name="Barbe V."/>
            <person name="Baeriswyl S."/>
            <person name="Bidet P."/>
            <person name="Bingen E."/>
            <person name="Bonacorsi S."/>
            <person name="Bouchier C."/>
            <person name="Bouvet O."/>
            <person name="Calteau A."/>
            <person name="Chiapello H."/>
            <person name="Clermont O."/>
            <person name="Cruveiller S."/>
            <person name="Danchin A."/>
            <person name="Diard M."/>
            <person name="Dossat C."/>
            <person name="Karoui M.E."/>
            <person name="Frapy E."/>
            <person name="Garry L."/>
            <person name="Ghigo J.M."/>
            <person name="Gilles A.M."/>
            <person name="Johnson J."/>
            <person name="Le Bouguenec C."/>
            <person name="Lescat M."/>
            <person name="Mangenot S."/>
            <person name="Martinez-Jehanne V."/>
            <person name="Matic I."/>
            <person name="Nassif X."/>
            <person name="Oztas S."/>
            <person name="Petit M.A."/>
            <person name="Pichon C."/>
            <person name="Rouy Z."/>
            <person name="Ruf C.S."/>
            <person name="Schneider D."/>
            <person name="Tourret J."/>
            <person name="Vacherie B."/>
            <person name="Vallenet D."/>
            <person name="Medigue C."/>
            <person name="Rocha E.P.C."/>
            <person name="Denamur E."/>
        </authorList>
    </citation>
    <scope>NUCLEOTIDE SEQUENCE [LARGE SCALE GENOMIC DNA]</scope>
    <source>
        <strain>S88 / ExPEC</strain>
    </source>
</reference>
<organism>
    <name type="scientific">Escherichia coli O45:K1 (strain S88 / ExPEC)</name>
    <dbReference type="NCBI Taxonomy" id="585035"/>
    <lineage>
        <taxon>Bacteria</taxon>
        <taxon>Pseudomonadati</taxon>
        <taxon>Pseudomonadota</taxon>
        <taxon>Gammaproteobacteria</taxon>
        <taxon>Enterobacterales</taxon>
        <taxon>Enterobacteriaceae</taxon>
        <taxon>Escherichia</taxon>
    </lineage>
</organism>
<protein>
    <recommendedName>
        <fullName evidence="1">PKHD-type hydroxylase YbiX</fullName>
        <ecNumber evidence="1">1.14.11.-</ecNumber>
    </recommendedName>
</protein>
<proteinExistence type="inferred from homology"/>
<sequence>MMYHIPGVLSPQDVARFREQLEQAEWVDGRVTTGAQGAQVKNNQQVDTRSALYAALQNEVLNAVNQHALFFAAALPRTLSTPLFNRYQNNETYGFHVDGAVRSHPQNGWMRTDLSATLFLSDPESYDGGELVVNDTFGQHRVKLPAGDLVLYPSSSLHCVTPVTRGVRVASFMWIQSMIRDDKKRAMLFELDNNIQSLKSRYGESEEILSLLNLYHNLLREWSEI</sequence>
<dbReference type="EC" id="1.14.11.-" evidence="1"/>
<dbReference type="EMBL" id="CU928161">
    <property type="protein sequence ID" value="CAR02160.1"/>
    <property type="molecule type" value="Genomic_DNA"/>
</dbReference>
<dbReference type="RefSeq" id="WP_000990167.1">
    <property type="nucleotide sequence ID" value="NC_011742.1"/>
</dbReference>
<dbReference type="SMR" id="B7MGR2"/>
<dbReference type="KEGG" id="ecz:ECS88_0822"/>
<dbReference type="HOGENOM" id="CLU_106663_0_0_6"/>
<dbReference type="Proteomes" id="UP000000747">
    <property type="component" value="Chromosome"/>
</dbReference>
<dbReference type="GO" id="GO:0016706">
    <property type="term" value="F:2-oxoglutarate-dependent dioxygenase activity"/>
    <property type="evidence" value="ECO:0007669"/>
    <property type="project" value="UniProtKB-UniRule"/>
</dbReference>
<dbReference type="GO" id="GO:0005506">
    <property type="term" value="F:iron ion binding"/>
    <property type="evidence" value="ECO:0007669"/>
    <property type="project" value="UniProtKB-UniRule"/>
</dbReference>
<dbReference type="GO" id="GO:0031418">
    <property type="term" value="F:L-ascorbic acid binding"/>
    <property type="evidence" value="ECO:0007669"/>
    <property type="project" value="UniProtKB-KW"/>
</dbReference>
<dbReference type="GO" id="GO:0006974">
    <property type="term" value="P:DNA damage response"/>
    <property type="evidence" value="ECO:0007669"/>
    <property type="project" value="TreeGrafter"/>
</dbReference>
<dbReference type="GO" id="GO:0006879">
    <property type="term" value="P:intracellular iron ion homeostasis"/>
    <property type="evidence" value="ECO:0007669"/>
    <property type="project" value="TreeGrafter"/>
</dbReference>
<dbReference type="FunFam" id="2.60.120.620:FF:000006">
    <property type="entry name" value="PKHD-type hydroxylase YbiX"/>
    <property type="match status" value="1"/>
</dbReference>
<dbReference type="FunFam" id="4.10.860.20:FF:000001">
    <property type="entry name" value="PKHD-type hydroxylase YbiX"/>
    <property type="match status" value="1"/>
</dbReference>
<dbReference type="Gene3D" id="2.60.120.620">
    <property type="entry name" value="q2cbj1_9rhob like domain"/>
    <property type="match status" value="1"/>
</dbReference>
<dbReference type="Gene3D" id="4.10.860.20">
    <property type="entry name" value="Rabenosyn, Rab binding domain"/>
    <property type="match status" value="1"/>
</dbReference>
<dbReference type="HAMAP" id="MF_00657">
    <property type="entry name" value="Hydroxyl_YbiX"/>
    <property type="match status" value="1"/>
</dbReference>
<dbReference type="InterPro" id="IPR005123">
    <property type="entry name" value="Oxoglu/Fe-dep_dioxygenase_dom"/>
</dbReference>
<dbReference type="InterPro" id="IPR041097">
    <property type="entry name" value="PKHD_C"/>
</dbReference>
<dbReference type="InterPro" id="IPR023550">
    <property type="entry name" value="PKHD_hydroxylase"/>
</dbReference>
<dbReference type="InterPro" id="IPR006620">
    <property type="entry name" value="Pro_4_hyd_alph"/>
</dbReference>
<dbReference type="InterPro" id="IPR044862">
    <property type="entry name" value="Pro_4_hyd_alph_FE2OG_OXY"/>
</dbReference>
<dbReference type="NCBIfam" id="NF003972">
    <property type="entry name" value="PRK05467.1-1"/>
    <property type="match status" value="1"/>
</dbReference>
<dbReference type="NCBIfam" id="NF003974">
    <property type="entry name" value="PRK05467.1-3"/>
    <property type="match status" value="1"/>
</dbReference>
<dbReference type="NCBIfam" id="NF003975">
    <property type="entry name" value="PRK05467.1-4"/>
    <property type="match status" value="1"/>
</dbReference>
<dbReference type="PANTHER" id="PTHR41536">
    <property type="entry name" value="PKHD-TYPE HYDROXYLASE YBIX"/>
    <property type="match status" value="1"/>
</dbReference>
<dbReference type="PANTHER" id="PTHR41536:SF1">
    <property type="entry name" value="PKHD-TYPE HYDROXYLASE YBIX"/>
    <property type="match status" value="1"/>
</dbReference>
<dbReference type="Pfam" id="PF13640">
    <property type="entry name" value="2OG-FeII_Oxy_3"/>
    <property type="match status" value="1"/>
</dbReference>
<dbReference type="Pfam" id="PF18331">
    <property type="entry name" value="PKHD_C"/>
    <property type="match status" value="1"/>
</dbReference>
<dbReference type="SMART" id="SM00702">
    <property type="entry name" value="P4Hc"/>
    <property type="match status" value="1"/>
</dbReference>
<dbReference type="SUPFAM" id="SSF51197">
    <property type="entry name" value="Clavaminate synthase-like"/>
    <property type="match status" value="1"/>
</dbReference>
<dbReference type="PROSITE" id="PS51471">
    <property type="entry name" value="FE2OG_OXY"/>
    <property type="match status" value="1"/>
</dbReference>
<gene>
    <name evidence="1" type="primary">ybiX</name>
    <name type="ordered locus">ECS88_0822</name>
</gene>